<name>RIMM_BURL3</name>
<feature type="chain" id="PRO_0000244117" description="Ribosome maturation factor RimM">
    <location>
        <begin position="1"/>
        <end position="225"/>
    </location>
</feature>
<feature type="domain" description="PRC barrel" evidence="1">
    <location>
        <begin position="144"/>
        <end position="225"/>
    </location>
</feature>
<gene>
    <name evidence="1" type="primary">rimM</name>
    <name type="ordered locus">Bcep18194_A4184</name>
</gene>
<accession>Q39ID5</accession>
<dbReference type="EMBL" id="CP000151">
    <property type="protein sequence ID" value="ABB07781.1"/>
    <property type="molecule type" value="Genomic_DNA"/>
</dbReference>
<dbReference type="RefSeq" id="WP_011351357.1">
    <property type="nucleotide sequence ID" value="NC_007510.1"/>
</dbReference>
<dbReference type="SMR" id="Q39ID5"/>
<dbReference type="GeneID" id="45094083"/>
<dbReference type="KEGG" id="bur:Bcep18194_A4184"/>
<dbReference type="PATRIC" id="fig|482957.22.peg.1071"/>
<dbReference type="HOGENOM" id="CLU_077636_1_0_4"/>
<dbReference type="Proteomes" id="UP000002705">
    <property type="component" value="Chromosome 1"/>
</dbReference>
<dbReference type="GO" id="GO:0005737">
    <property type="term" value="C:cytoplasm"/>
    <property type="evidence" value="ECO:0007669"/>
    <property type="project" value="UniProtKB-SubCell"/>
</dbReference>
<dbReference type="GO" id="GO:0005840">
    <property type="term" value="C:ribosome"/>
    <property type="evidence" value="ECO:0007669"/>
    <property type="project" value="InterPro"/>
</dbReference>
<dbReference type="GO" id="GO:0043022">
    <property type="term" value="F:ribosome binding"/>
    <property type="evidence" value="ECO:0007669"/>
    <property type="project" value="InterPro"/>
</dbReference>
<dbReference type="GO" id="GO:0042274">
    <property type="term" value="P:ribosomal small subunit biogenesis"/>
    <property type="evidence" value="ECO:0007669"/>
    <property type="project" value="UniProtKB-UniRule"/>
</dbReference>
<dbReference type="GO" id="GO:0006364">
    <property type="term" value="P:rRNA processing"/>
    <property type="evidence" value="ECO:0007669"/>
    <property type="project" value="UniProtKB-UniRule"/>
</dbReference>
<dbReference type="Gene3D" id="2.30.30.240">
    <property type="entry name" value="PRC-barrel domain"/>
    <property type="match status" value="1"/>
</dbReference>
<dbReference type="Gene3D" id="2.40.30.60">
    <property type="entry name" value="RimM"/>
    <property type="match status" value="1"/>
</dbReference>
<dbReference type="HAMAP" id="MF_00014">
    <property type="entry name" value="Ribosome_mat_RimM"/>
    <property type="match status" value="1"/>
</dbReference>
<dbReference type="InterPro" id="IPR011033">
    <property type="entry name" value="PRC_barrel-like_sf"/>
</dbReference>
<dbReference type="InterPro" id="IPR056792">
    <property type="entry name" value="PRC_RimM"/>
</dbReference>
<dbReference type="InterPro" id="IPR011961">
    <property type="entry name" value="RimM"/>
</dbReference>
<dbReference type="InterPro" id="IPR002676">
    <property type="entry name" value="RimM_N"/>
</dbReference>
<dbReference type="InterPro" id="IPR036976">
    <property type="entry name" value="RimM_N_sf"/>
</dbReference>
<dbReference type="InterPro" id="IPR009000">
    <property type="entry name" value="Transl_B-barrel_sf"/>
</dbReference>
<dbReference type="NCBIfam" id="TIGR02273">
    <property type="entry name" value="16S_RimM"/>
    <property type="match status" value="1"/>
</dbReference>
<dbReference type="PANTHER" id="PTHR33692">
    <property type="entry name" value="RIBOSOME MATURATION FACTOR RIMM"/>
    <property type="match status" value="1"/>
</dbReference>
<dbReference type="PANTHER" id="PTHR33692:SF1">
    <property type="entry name" value="RIBOSOME MATURATION FACTOR RIMM"/>
    <property type="match status" value="1"/>
</dbReference>
<dbReference type="Pfam" id="PF24986">
    <property type="entry name" value="PRC_RimM"/>
    <property type="match status" value="1"/>
</dbReference>
<dbReference type="Pfam" id="PF01782">
    <property type="entry name" value="RimM"/>
    <property type="match status" value="1"/>
</dbReference>
<dbReference type="SUPFAM" id="SSF50346">
    <property type="entry name" value="PRC-barrel domain"/>
    <property type="match status" value="1"/>
</dbReference>
<dbReference type="SUPFAM" id="SSF50447">
    <property type="entry name" value="Translation proteins"/>
    <property type="match status" value="1"/>
</dbReference>
<protein>
    <recommendedName>
        <fullName evidence="1">Ribosome maturation factor RimM</fullName>
    </recommendedName>
</protein>
<proteinExistence type="inferred from homology"/>
<comment type="function">
    <text evidence="1">An accessory protein needed during the final step in the assembly of 30S ribosomal subunit, possibly for assembly of the head region. Essential for efficient processing of 16S rRNA. May be needed both before and after RbfA during the maturation of 16S rRNA. It has affinity for free ribosomal 30S subunits but not for 70S ribosomes.</text>
</comment>
<comment type="subunit">
    <text evidence="1">Binds ribosomal protein uS19.</text>
</comment>
<comment type="subcellular location">
    <subcellularLocation>
        <location evidence="1">Cytoplasm</location>
    </subcellularLocation>
</comment>
<comment type="domain">
    <text evidence="1">The PRC barrel domain binds ribosomal protein uS19.</text>
</comment>
<comment type="similarity">
    <text evidence="1">Belongs to the RimM family.</text>
</comment>
<reference key="1">
    <citation type="submission" date="2005-10" db="EMBL/GenBank/DDBJ databases">
        <title>Complete sequence of chromosome 1 of Burkholderia sp. 383.</title>
        <authorList>
            <consortium name="US DOE Joint Genome Institute"/>
            <person name="Copeland A."/>
            <person name="Lucas S."/>
            <person name="Lapidus A."/>
            <person name="Barry K."/>
            <person name="Detter J.C."/>
            <person name="Glavina T."/>
            <person name="Hammon N."/>
            <person name="Israni S."/>
            <person name="Pitluck S."/>
            <person name="Chain P."/>
            <person name="Malfatti S."/>
            <person name="Shin M."/>
            <person name="Vergez L."/>
            <person name="Schmutz J."/>
            <person name="Larimer F."/>
            <person name="Land M."/>
            <person name="Kyrpides N."/>
            <person name="Lykidis A."/>
            <person name="Richardson P."/>
        </authorList>
    </citation>
    <scope>NUCLEOTIDE SEQUENCE [LARGE SCALE GENOMIC DNA]</scope>
    <source>
        <strain>ATCC 17760 / DSM 23089 / LMG 22485 / NCIMB 9086 / R18194 / 383</strain>
    </source>
</reference>
<keyword id="KW-0143">Chaperone</keyword>
<keyword id="KW-0963">Cytoplasm</keyword>
<keyword id="KW-0690">Ribosome biogenesis</keyword>
<keyword id="KW-0698">rRNA processing</keyword>
<evidence type="ECO:0000255" key="1">
    <source>
        <dbReference type="HAMAP-Rule" id="MF_00014"/>
    </source>
</evidence>
<sequence>MAGHDSGNARRGRASFGAFVRKPVERDAVANAGQAAEQGSLEEAQAWPDDAVEVGAVVDAYGLKGWVKVATHADAGRGGDALLKARHWWLERGAERLSVRIMQSKAHSDTVVAQPAGVSDRDAAFAMRGFRVFVRREDFPALAADEFYWVDLIGLDVVNEQSVALGKVSGMIDNGVHSIMRVEYPATGKDGQPTTDERLIPFVGVYVKTVDQAARRIVVDWEADY</sequence>
<organism>
    <name type="scientific">Burkholderia lata (strain ATCC 17760 / DSM 23089 / LMG 22485 / NCIMB 9086 / R18194 / 383)</name>
    <dbReference type="NCBI Taxonomy" id="482957"/>
    <lineage>
        <taxon>Bacteria</taxon>
        <taxon>Pseudomonadati</taxon>
        <taxon>Pseudomonadota</taxon>
        <taxon>Betaproteobacteria</taxon>
        <taxon>Burkholderiales</taxon>
        <taxon>Burkholderiaceae</taxon>
        <taxon>Burkholderia</taxon>
        <taxon>Burkholderia cepacia complex</taxon>
    </lineage>
</organism>